<proteinExistence type="evidence at protein level"/>
<feature type="signal peptide" evidence="2">
    <location>
        <begin position="1"/>
        <end position="21"/>
    </location>
</feature>
<feature type="chain" id="PRO_0000017771" description="Hepatic triacylglycerol lipase">
    <location>
        <begin position="22"/>
        <end position="494"/>
    </location>
</feature>
<feature type="domain" description="PLAT" evidence="4">
    <location>
        <begin position="353"/>
        <end position="487"/>
    </location>
</feature>
<feature type="region of interest" description="Essential for determining substrate specificity" evidence="2">
    <location>
        <begin position="255"/>
        <end position="278"/>
    </location>
</feature>
<feature type="active site" description="Nucleophile" evidence="1">
    <location>
        <position position="169"/>
    </location>
</feature>
<feature type="active site" description="Charge relay system" evidence="5">
    <location>
        <position position="195"/>
    </location>
</feature>
<feature type="active site" description="Charge relay system" evidence="5">
    <location>
        <position position="280"/>
    </location>
</feature>
<feature type="glycosylation site" description="N-linked (GlcNAc...) asparagine" evidence="3">
    <location>
        <position position="79"/>
    </location>
</feature>
<feature type="glycosylation site" description="N-linked (GlcNAc...) asparagine" evidence="3">
    <location>
        <position position="398"/>
    </location>
</feature>
<feature type="sequence conflict" description="In Ref. 2; AAA41335." evidence="11" ref="2">
    <original>N</original>
    <variation>K</variation>
    <location>
        <position position="277"/>
    </location>
</feature>
<feature type="sequence conflict" description="In Ref. 2; AAA41335." evidence="11" ref="2">
    <original>Q</original>
    <variation>H</variation>
    <location>
        <position position="302"/>
    </location>
</feature>
<feature type="sequence conflict" description="In Ref. 2; AAA41335." evidence="11" ref="2">
    <original>S</original>
    <variation>T</variation>
    <location>
        <position position="308"/>
    </location>
</feature>
<feature type="sequence conflict" description="In Ref. 2; AAA41335." evidence="11" ref="2">
    <original>V</original>
    <variation>A</variation>
    <location>
        <position position="335"/>
    </location>
</feature>
<feature type="sequence conflict" description="In Ref. 2; AAA41335." evidence="11" ref="2">
    <original>M</original>
    <variation>I</variation>
    <location>
        <position position="369"/>
    </location>
</feature>
<feature type="sequence conflict" description="In Ref. 2; AAA41335." evidence="11" ref="2">
    <original>N</original>
    <variation>D</variation>
    <location>
        <position position="408"/>
    </location>
</feature>
<feature type="sequence conflict" description="In Ref. 2; AAA41335." evidence="11" ref="2">
    <original>V</original>
    <variation>L</variation>
    <location>
        <position position="451"/>
    </location>
</feature>
<name>LIPC_RAT</name>
<protein>
    <recommendedName>
        <fullName>Hepatic triacylglycerol lipase</fullName>
        <shortName>HL</shortName>
        <shortName>Hepatic lipase</shortName>
        <ecNumber evidence="6 7 8 10">3.1.1.3</ecNumber>
    </recommendedName>
    <alternativeName>
        <fullName>Lipase member C</fullName>
    </alternativeName>
    <alternativeName>
        <fullName>Lysophospholipase</fullName>
        <ecNumber evidence="6">3.1.1.5</ecNumber>
    </alternativeName>
    <alternativeName>
        <fullName>Phospholipase A1</fullName>
        <ecNumber evidence="6 8 9 10">3.1.1.32</ecNumber>
    </alternativeName>
</protein>
<dbReference type="EC" id="3.1.1.3" evidence="6 7 8 10"/>
<dbReference type="EC" id="3.1.1.5" evidence="6"/>
<dbReference type="EC" id="3.1.1.32" evidence="6 8 9 10"/>
<dbReference type="EMBL" id="X17366">
    <property type="protein sequence ID" value="CAA35241.1"/>
    <property type="molecule type" value="mRNA"/>
</dbReference>
<dbReference type="EMBL" id="X17367">
    <property type="protein sequence ID" value="CAA35242.1"/>
    <property type="molecule type" value="Genomic_DNA"/>
</dbReference>
<dbReference type="EMBL" id="M16235">
    <property type="protein sequence ID" value="AAA41335.1"/>
    <property type="molecule type" value="mRNA"/>
</dbReference>
<dbReference type="PIR" id="A27442">
    <property type="entry name" value="A27442"/>
</dbReference>
<dbReference type="SMR" id="P07867"/>
<dbReference type="FunCoup" id="P07867">
    <property type="interactions" value="66"/>
</dbReference>
<dbReference type="IntAct" id="P07867">
    <property type="interactions" value="1"/>
</dbReference>
<dbReference type="STRING" id="10116.ENSRNOP00000073927"/>
<dbReference type="SwissLipids" id="SLP:000000571"/>
<dbReference type="ESTHER" id="ratno-1hlip">
    <property type="family name" value="Hepatic_Lipase"/>
</dbReference>
<dbReference type="GlyCosmos" id="P07867">
    <property type="glycosylation" value="2 sites, No reported glycans"/>
</dbReference>
<dbReference type="GlyGen" id="P07867">
    <property type="glycosylation" value="2 sites"/>
</dbReference>
<dbReference type="PhosphoSitePlus" id="P07867"/>
<dbReference type="PaxDb" id="10116-ENSRNOP00000047403"/>
<dbReference type="PeptideAtlas" id="P07867"/>
<dbReference type="UCSC" id="RGD:3009">
    <property type="organism name" value="rat"/>
</dbReference>
<dbReference type="AGR" id="RGD:3009"/>
<dbReference type="RGD" id="3009">
    <property type="gene designation" value="Lipc"/>
</dbReference>
<dbReference type="eggNOG" id="ENOG502QVTG">
    <property type="taxonomic scope" value="Eukaryota"/>
</dbReference>
<dbReference type="InParanoid" id="P07867"/>
<dbReference type="PhylomeDB" id="P07867"/>
<dbReference type="Reactome" id="R-RNO-8963889">
    <property type="pathway name" value="Assembly of active LPL and LIPC lipase complexes"/>
</dbReference>
<dbReference type="Reactome" id="R-RNO-8964026">
    <property type="pathway name" value="Chylomicron clearance"/>
</dbReference>
<dbReference type="PRO" id="PR:P07867"/>
<dbReference type="Proteomes" id="UP000002494">
    <property type="component" value="Unplaced"/>
</dbReference>
<dbReference type="GO" id="GO:0009986">
    <property type="term" value="C:cell surface"/>
    <property type="evidence" value="ECO:0000314"/>
    <property type="project" value="RGD"/>
</dbReference>
<dbReference type="GO" id="GO:0005769">
    <property type="term" value="C:early endosome"/>
    <property type="evidence" value="ECO:0000314"/>
    <property type="project" value="RGD"/>
</dbReference>
<dbReference type="GO" id="GO:0005615">
    <property type="term" value="C:extracellular space"/>
    <property type="evidence" value="ECO:0000314"/>
    <property type="project" value="RGD"/>
</dbReference>
<dbReference type="GO" id="GO:0034364">
    <property type="term" value="C:high-density lipoprotein particle"/>
    <property type="evidence" value="ECO:0007669"/>
    <property type="project" value="UniProtKB-KW"/>
</dbReference>
<dbReference type="GO" id="GO:0005770">
    <property type="term" value="C:late endosome"/>
    <property type="evidence" value="ECO:0000314"/>
    <property type="project" value="RGD"/>
</dbReference>
<dbReference type="GO" id="GO:0005902">
    <property type="term" value="C:microvillus"/>
    <property type="evidence" value="ECO:0000314"/>
    <property type="project" value="RGD"/>
</dbReference>
<dbReference type="GO" id="GO:0008126">
    <property type="term" value="F:acetylesterase activity"/>
    <property type="evidence" value="ECO:0000314"/>
    <property type="project" value="RGD"/>
</dbReference>
<dbReference type="GO" id="GO:0016746">
    <property type="term" value="F:acyltransferase activity"/>
    <property type="evidence" value="ECO:0000314"/>
    <property type="project" value="RGD"/>
</dbReference>
<dbReference type="GO" id="GO:0034185">
    <property type="term" value="F:apolipoprotein binding"/>
    <property type="evidence" value="ECO:0000314"/>
    <property type="project" value="RGD"/>
</dbReference>
<dbReference type="GO" id="GO:0035478">
    <property type="term" value="F:chylomicron binding"/>
    <property type="evidence" value="ECO:0000314"/>
    <property type="project" value="BHF-UCL"/>
</dbReference>
<dbReference type="GO" id="GO:0043395">
    <property type="term" value="F:heparan sulfate proteoglycan binding"/>
    <property type="evidence" value="ECO:0000315"/>
    <property type="project" value="RGD"/>
</dbReference>
<dbReference type="GO" id="GO:0008201">
    <property type="term" value="F:heparin binding"/>
    <property type="evidence" value="ECO:0000314"/>
    <property type="project" value="RGD"/>
</dbReference>
<dbReference type="GO" id="GO:0042802">
    <property type="term" value="F:identical protein binding"/>
    <property type="evidence" value="ECO:0000353"/>
    <property type="project" value="RGD"/>
</dbReference>
<dbReference type="GO" id="GO:0016298">
    <property type="term" value="F:lipase activity"/>
    <property type="evidence" value="ECO:0000266"/>
    <property type="project" value="RGD"/>
</dbReference>
<dbReference type="GO" id="GO:0008289">
    <property type="term" value="F:lipid binding"/>
    <property type="evidence" value="ECO:0000314"/>
    <property type="project" value="RGD"/>
</dbReference>
<dbReference type="GO" id="GO:0004465">
    <property type="term" value="F:lipoprotein lipase activity"/>
    <property type="evidence" value="ECO:0000318"/>
    <property type="project" value="GO_Central"/>
</dbReference>
<dbReference type="GO" id="GO:0030169">
    <property type="term" value="F:low-density lipoprotein particle binding"/>
    <property type="evidence" value="ECO:0000314"/>
    <property type="project" value="BHF-UCL"/>
</dbReference>
<dbReference type="GO" id="GO:0004622">
    <property type="term" value="F:lysophospholipase activity"/>
    <property type="evidence" value="ECO:0000314"/>
    <property type="project" value="RGD"/>
</dbReference>
<dbReference type="GO" id="GO:0047372">
    <property type="term" value="F:monoacylglycerol lipase activity"/>
    <property type="evidence" value="ECO:0000314"/>
    <property type="project" value="RGD"/>
</dbReference>
<dbReference type="GO" id="GO:0008970">
    <property type="term" value="F:phospholipase A1 activity"/>
    <property type="evidence" value="ECO:0000314"/>
    <property type="project" value="UniProtKB"/>
</dbReference>
<dbReference type="GO" id="GO:0004806">
    <property type="term" value="F:triacylglycerol lipase activity"/>
    <property type="evidence" value="ECO:0000314"/>
    <property type="project" value="UniProtKB"/>
</dbReference>
<dbReference type="GO" id="GO:0046222">
    <property type="term" value="P:aflatoxin metabolic process"/>
    <property type="evidence" value="ECO:0000270"/>
    <property type="project" value="RGD"/>
</dbReference>
<dbReference type="GO" id="GO:0071320">
    <property type="term" value="P:cellular response to cAMP"/>
    <property type="evidence" value="ECO:0000270"/>
    <property type="project" value="RGD"/>
</dbReference>
<dbReference type="GO" id="GO:0032870">
    <property type="term" value="P:cellular response to hormone stimulus"/>
    <property type="evidence" value="ECO:0000270"/>
    <property type="project" value="RGD"/>
</dbReference>
<dbReference type="GO" id="GO:0042632">
    <property type="term" value="P:cholesterol homeostasis"/>
    <property type="evidence" value="ECO:0000266"/>
    <property type="project" value="RGD"/>
</dbReference>
<dbReference type="GO" id="GO:0008203">
    <property type="term" value="P:cholesterol metabolic process"/>
    <property type="evidence" value="ECO:0000266"/>
    <property type="project" value="RGD"/>
</dbReference>
<dbReference type="GO" id="GO:0030301">
    <property type="term" value="P:cholesterol transport"/>
    <property type="evidence" value="ECO:0000266"/>
    <property type="project" value="RGD"/>
</dbReference>
<dbReference type="GO" id="GO:0034382">
    <property type="term" value="P:chylomicron remnant clearance"/>
    <property type="evidence" value="ECO:0000314"/>
    <property type="project" value="RGD"/>
</dbReference>
<dbReference type="GO" id="GO:0034371">
    <property type="term" value="P:chylomicron remodeling"/>
    <property type="evidence" value="ECO:0000314"/>
    <property type="project" value="RGD"/>
</dbReference>
<dbReference type="GO" id="GO:0007623">
    <property type="term" value="P:circadian rhythm"/>
    <property type="evidence" value="ECO:0000270"/>
    <property type="project" value="RGD"/>
</dbReference>
<dbReference type="GO" id="GO:0048589">
    <property type="term" value="P:developmental growth"/>
    <property type="evidence" value="ECO:0000270"/>
    <property type="project" value="RGD"/>
</dbReference>
<dbReference type="GO" id="GO:0006633">
    <property type="term" value="P:fatty acid biosynthetic process"/>
    <property type="evidence" value="ECO:0000266"/>
    <property type="project" value="RGD"/>
</dbReference>
<dbReference type="GO" id="GO:0006631">
    <property type="term" value="P:fatty acid metabolic process"/>
    <property type="evidence" value="ECO:0000314"/>
    <property type="project" value="RGD"/>
</dbReference>
<dbReference type="GO" id="GO:0046475">
    <property type="term" value="P:glycerophospholipid catabolic process"/>
    <property type="evidence" value="ECO:0000314"/>
    <property type="project" value="RGD"/>
</dbReference>
<dbReference type="GO" id="GO:0015012">
    <property type="term" value="P:heparan sulfate proteoglycan biosynthetic process"/>
    <property type="evidence" value="ECO:0000314"/>
    <property type="project" value="RGD"/>
</dbReference>
<dbReference type="GO" id="GO:0034375">
    <property type="term" value="P:high-density lipoprotein particle remodeling"/>
    <property type="evidence" value="ECO:0000314"/>
    <property type="project" value="RGD"/>
</dbReference>
<dbReference type="GO" id="GO:0001889">
    <property type="term" value="P:liver development"/>
    <property type="evidence" value="ECO:0000270"/>
    <property type="project" value="RGD"/>
</dbReference>
<dbReference type="GO" id="GO:0034383">
    <property type="term" value="P:low-density lipoprotein particle clearance"/>
    <property type="evidence" value="ECO:0000314"/>
    <property type="project" value="RGD"/>
</dbReference>
<dbReference type="GO" id="GO:0034374">
    <property type="term" value="P:low-density lipoprotein particle remodeling"/>
    <property type="evidence" value="ECO:0000314"/>
    <property type="project" value="BHF-UCL"/>
</dbReference>
<dbReference type="GO" id="GO:0046461">
    <property type="term" value="P:neutral lipid catabolic process"/>
    <property type="evidence" value="ECO:0000314"/>
    <property type="project" value="RGD"/>
</dbReference>
<dbReference type="GO" id="GO:0046473">
    <property type="term" value="P:phosphatidic acid metabolic process"/>
    <property type="evidence" value="ECO:0000314"/>
    <property type="project" value="RGD"/>
</dbReference>
<dbReference type="GO" id="GO:0046470">
    <property type="term" value="P:phosphatidylcholine metabolic process"/>
    <property type="evidence" value="ECO:0000314"/>
    <property type="project" value="RGD"/>
</dbReference>
<dbReference type="GO" id="GO:0046337">
    <property type="term" value="P:phosphatidylethanolamine metabolic process"/>
    <property type="evidence" value="ECO:0000314"/>
    <property type="project" value="RGD"/>
</dbReference>
<dbReference type="GO" id="GO:0006658">
    <property type="term" value="P:phosphatidylserine metabolic process"/>
    <property type="evidence" value="ECO:0000314"/>
    <property type="project" value="RGD"/>
</dbReference>
<dbReference type="GO" id="GO:0097006">
    <property type="term" value="P:regulation of plasma lipoprotein particle levels"/>
    <property type="evidence" value="ECO:0000315"/>
    <property type="project" value="RGD"/>
</dbReference>
<dbReference type="GO" id="GO:0010034">
    <property type="term" value="P:response to acetate"/>
    <property type="evidence" value="ECO:0000270"/>
    <property type="project" value="RGD"/>
</dbReference>
<dbReference type="GO" id="GO:0043200">
    <property type="term" value="P:response to amino acid"/>
    <property type="evidence" value="ECO:0000270"/>
    <property type="project" value="RGD"/>
</dbReference>
<dbReference type="GO" id="GO:0051592">
    <property type="term" value="P:response to calcium ion"/>
    <property type="evidence" value="ECO:0000270"/>
    <property type="project" value="RGD"/>
</dbReference>
<dbReference type="GO" id="GO:0009743">
    <property type="term" value="P:response to carbohydrate"/>
    <property type="evidence" value="ECO:0000270"/>
    <property type="project" value="RGD"/>
</dbReference>
<dbReference type="GO" id="GO:0046688">
    <property type="term" value="P:response to copper ion"/>
    <property type="evidence" value="ECO:0000270"/>
    <property type="project" value="RGD"/>
</dbReference>
<dbReference type="GO" id="GO:0070542">
    <property type="term" value="P:response to fatty acid"/>
    <property type="evidence" value="ECO:0000270"/>
    <property type="project" value="RGD"/>
</dbReference>
<dbReference type="GO" id="GO:0051384">
    <property type="term" value="P:response to glucocorticoid"/>
    <property type="evidence" value="ECO:0000270"/>
    <property type="project" value="RGD"/>
</dbReference>
<dbReference type="GO" id="GO:0009725">
    <property type="term" value="P:response to hormone"/>
    <property type="evidence" value="ECO:0000270"/>
    <property type="project" value="RGD"/>
</dbReference>
<dbReference type="GO" id="GO:0001666">
    <property type="term" value="P:response to hypoxia"/>
    <property type="evidence" value="ECO:0000270"/>
    <property type="project" value="RGD"/>
</dbReference>
<dbReference type="GO" id="GO:0033993">
    <property type="term" value="P:response to lipid"/>
    <property type="evidence" value="ECO:0000270"/>
    <property type="project" value="RGD"/>
</dbReference>
<dbReference type="GO" id="GO:0032026">
    <property type="term" value="P:response to magnesium ion"/>
    <property type="evidence" value="ECO:0000270"/>
    <property type="project" value="RGD"/>
</dbReference>
<dbReference type="GO" id="GO:0031667">
    <property type="term" value="P:response to nutrient levels"/>
    <property type="evidence" value="ECO:0000270"/>
    <property type="project" value="RGD"/>
</dbReference>
<dbReference type="GO" id="GO:0043434">
    <property type="term" value="P:response to peptide hormone"/>
    <property type="evidence" value="ECO:0000270"/>
    <property type="project" value="RGD"/>
</dbReference>
<dbReference type="GO" id="GO:0009410">
    <property type="term" value="P:response to xenobiotic stimulus"/>
    <property type="evidence" value="ECO:0000270"/>
    <property type="project" value="RGD"/>
</dbReference>
<dbReference type="GO" id="GO:0019433">
    <property type="term" value="P:triglyceride catabolic process"/>
    <property type="evidence" value="ECO:0000266"/>
    <property type="project" value="RGD"/>
</dbReference>
<dbReference type="GO" id="GO:0070328">
    <property type="term" value="P:triglyceride homeostasis"/>
    <property type="evidence" value="ECO:0000266"/>
    <property type="project" value="RGD"/>
</dbReference>
<dbReference type="GO" id="GO:0006641">
    <property type="term" value="P:triglyceride metabolic process"/>
    <property type="evidence" value="ECO:0000314"/>
    <property type="project" value="RGD"/>
</dbReference>
<dbReference type="GO" id="GO:0034372">
    <property type="term" value="P:very-low-density lipoprotein particle remodeling"/>
    <property type="evidence" value="ECO:0000314"/>
    <property type="project" value="RGD"/>
</dbReference>
<dbReference type="CDD" id="cd00707">
    <property type="entry name" value="Pancreat_lipase_like"/>
    <property type="match status" value="1"/>
</dbReference>
<dbReference type="CDD" id="cd01758">
    <property type="entry name" value="PLAT_LPL"/>
    <property type="match status" value="1"/>
</dbReference>
<dbReference type="FunFam" id="3.40.50.1820:FF:000101">
    <property type="entry name" value="Hepatic triacylglycerol lipase"/>
    <property type="match status" value="1"/>
</dbReference>
<dbReference type="FunFam" id="2.60.60.20:FF:000010">
    <property type="entry name" value="hepatic triacylglycerol lipase"/>
    <property type="match status" value="1"/>
</dbReference>
<dbReference type="Gene3D" id="3.40.50.1820">
    <property type="entry name" value="alpha/beta hydrolase"/>
    <property type="match status" value="1"/>
</dbReference>
<dbReference type="Gene3D" id="2.60.60.20">
    <property type="entry name" value="PLAT/LH2 domain"/>
    <property type="match status" value="1"/>
</dbReference>
<dbReference type="InterPro" id="IPR029058">
    <property type="entry name" value="AB_hydrolase_fold"/>
</dbReference>
<dbReference type="InterPro" id="IPR013818">
    <property type="entry name" value="Lipase"/>
</dbReference>
<dbReference type="InterPro" id="IPR002333">
    <property type="entry name" value="Lipase_hep"/>
</dbReference>
<dbReference type="InterPro" id="IPR016272">
    <property type="entry name" value="Lipase_LIPH"/>
</dbReference>
<dbReference type="InterPro" id="IPR033906">
    <property type="entry name" value="Lipase_N"/>
</dbReference>
<dbReference type="InterPro" id="IPR001024">
    <property type="entry name" value="PLAT/LH2_dom"/>
</dbReference>
<dbReference type="InterPro" id="IPR036392">
    <property type="entry name" value="PLAT/LH2_dom_sf"/>
</dbReference>
<dbReference type="InterPro" id="IPR000734">
    <property type="entry name" value="TAG_lipase"/>
</dbReference>
<dbReference type="PANTHER" id="PTHR11610:SF2">
    <property type="entry name" value="HEPATIC TRIACYLGLYCEROL LIPASE"/>
    <property type="match status" value="1"/>
</dbReference>
<dbReference type="PANTHER" id="PTHR11610">
    <property type="entry name" value="LIPASE"/>
    <property type="match status" value="1"/>
</dbReference>
<dbReference type="Pfam" id="PF00151">
    <property type="entry name" value="Lipase"/>
    <property type="match status" value="1"/>
</dbReference>
<dbReference type="Pfam" id="PF01477">
    <property type="entry name" value="PLAT"/>
    <property type="match status" value="1"/>
</dbReference>
<dbReference type="PIRSF" id="PIRSF000865">
    <property type="entry name" value="Lipoprotein_lipase_LIPH"/>
    <property type="match status" value="1"/>
</dbReference>
<dbReference type="PRINTS" id="PR00824">
    <property type="entry name" value="HEPLIPASE"/>
</dbReference>
<dbReference type="PRINTS" id="PR00821">
    <property type="entry name" value="TAGLIPASE"/>
</dbReference>
<dbReference type="SMART" id="SM00308">
    <property type="entry name" value="LH2"/>
    <property type="match status" value="1"/>
</dbReference>
<dbReference type="SUPFAM" id="SSF53474">
    <property type="entry name" value="alpha/beta-Hydrolases"/>
    <property type="match status" value="1"/>
</dbReference>
<dbReference type="SUPFAM" id="SSF49723">
    <property type="entry name" value="Lipase/lipooxygenase domain (PLAT/LH2 domain)"/>
    <property type="match status" value="1"/>
</dbReference>
<dbReference type="PROSITE" id="PS00120">
    <property type="entry name" value="LIPASE_SER"/>
    <property type="match status" value="1"/>
</dbReference>
<dbReference type="PROSITE" id="PS50095">
    <property type="entry name" value="PLAT"/>
    <property type="match status" value="1"/>
</dbReference>
<keyword id="KW-0325">Glycoprotein</keyword>
<keyword id="KW-0345">HDL</keyword>
<keyword id="KW-0358">Heparin-binding</keyword>
<keyword id="KW-0378">Hydrolase</keyword>
<keyword id="KW-0442">Lipid degradation</keyword>
<keyword id="KW-0443">Lipid metabolism</keyword>
<keyword id="KW-1185">Reference proteome</keyword>
<keyword id="KW-0964">Secreted</keyword>
<keyword id="KW-0732">Signal</keyword>
<gene>
    <name type="primary">Lipc</name>
</gene>
<comment type="function">
    <text evidence="2 6 7 8 9 10">Catalyzes the hydrolysis of triglycerides and phospholipids present in circulating plasma lipoproteins, including chylomicrons, intermediate density lipoproteins (IDL), low density lipoproteins (LDL) of large size and high density lipoproteins (HDL), releasing free fatty acids (FFA) and smaller lipoprotein particles (PubMed:1531641, PubMed:1770315, PubMed:1865764, PubMed:6747460, PubMed:7074125). Also exhibits lysophospholipase activity (PubMed:1531641). Can hydrolyze both neutral lipid and phospholipid substrates but shows a greater binding affinity for neutral lipid substrates than phospholipid substrates (PubMed:1865764). In native LDL, preferentially hydrolyzes the phosphatidylcholine species containing polyunsaturated fatty acids at sn-2 position (By similarity).</text>
</comment>
<comment type="catalytic activity">
    <reaction evidence="6 7 8 10">
        <text>a triacylglycerol + H2O = a diacylglycerol + a fatty acid + H(+)</text>
        <dbReference type="Rhea" id="RHEA:12044"/>
        <dbReference type="ChEBI" id="CHEBI:15377"/>
        <dbReference type="ChEBI" id="CHEBI:15378"/>
        <dbReference type="ChEBI" id="CHEBI:17855"/>
        <dbReference type="ChEBI" id="CHEBI:18035"/>
        <dbReference type="ChEBI" id="CHEBI:28868"/>
        <dbReference type="EC" id="3.1.1.3"/>
    </reaction>
</comment>
<comment type="catalytic activity">
    <reaction evidence="6">
        <text>a 1-acyl-sn-glycero-3-phosphocholine + H2O = sn-glycerol 3-phosphocholine + a fatty acid + H(+)</text>
        <dbReference type="Rhea" id="RHEA:15177"/>
        <dbReference type="ChEBI" id="CHEBI:15377"/>
        <dbReference type="ChEBI" id="CHEBI:15378"/>
        <dbReference type="ChEBI" id="CHEBI:16870"/>
        <dbReference type="ChEBI" id="CHEBI:28868"/>
        <dbReference type="ChEBI" id="CHEBI:58168"/>
        <dbReference type="EC" id="3.1.1.5"/>
    </reaction>
</comment>
<comment type="catalytic activity">
    <reaction evidence="6 8 9 10">
        <text>a 1,2-diacyl-sn-glycero-3-phosphocholine + H2O = a 2-acyl-sn-glycero-3-phosphocholine + a fatty acid + H(+)</text>
        <dbReference type="Rhea" id="RHEA:18689"/>
        <dbReference type="ChEBI" id="CHEBI:15377"/>
        <dbReference type="ChEBI" id="CHEBI:15378"/>
        <dbReference type="ChEBI" id="CHEBI:28868"/>
        <dbReference type="ChEBI" id="CHEBI:57643"/>
        <dbReference type="ChEBI" id="CHEBI:57875"/>
        <dbReference type="EC" id="3.1.1.32"/>
    </reaction>
</comment>
<comment type="catalytic activity">
    <reaction evidence="8">
        <text>1,2-di-(9Z-octadecenoyl)-sn-glycerol + H2O = 2-(9Z-octadecenoyl)-glycerol + (9Z)-octadecenoate + H(+)</text>
        <dbReference type="Rhea" id="RHEA:38511"/>
        <dbReference type="ChEBI" id="CHEBI:15377"/>
        <dbReference type="ChEBI" id="CHEBI:15378"/>
        <dbReference type="ChEBI" id="CHEBI:30823"/>
        <dbReference type="ChEBI" id="CHEBI:52333"/>
        <dbReference type="ChEBI" id="CHEBI:73990"/>
    </reaction>
    <physiologicalReaction direction="left-to-right" evidence="13">
        <dbReference type="Rhea" id="RHEA:38512"/>
    </physiologicalReaction>
</comment>
<comment type="catalytic activity">
    <reaction evidence="6 10">
        <text>1,2,3-tri-(9Z-octadecenoyl)-glycerol + H2O = 2,3-di-(9Z)-octadecenoyl-sn-glycerol + (9Z)-octadecenoate + H(+)</text>
        <dbReference type="Rhea" id="RHEA:38391"/>
        <dbReference type="ChEBI" id="CHEBI:15377"/>
        <dbReference type="ChEBI" id="CHEBI:15378"/>
        <dbReference type="ChEBI" id="CHEBI:30823"/>
        <dbReference type="ChEBI" id="CHEBI:53753"/>
        <dbReference type="ChEBI" id="CHEBI:75824"/>
    </reaction>
    <physiologicalReaction direction="left-to-right" evidence="12">
        <dbReference type="Rhea" id="RHEA:38392"/>
    </physiologicalReaction>
</comment>
<comment type="catalytic activity">
    <reaction evidence="6">
        <text>1-(9Z-octadecenoyl)-sn-glycero-3-phospho-L-serine + H2O = sn-glycero-3-phospho-L-serine + (9Z)-octadecenoate + H(+)</text>
        <dbReference type="Rhea" id="RHEA:40499"/>
        <dbReference type="ChEBI" id="CHEBI:15377"/>
        <dbReference type="ChEBI" id="CHEBI:15378"/>
        <dbReference type="ChEBI" id="CHEBI:30823"/>
        <dbReference type="ChEBI" id="CHEBI:64765"/>
        <dbReference type="ChEBI" id="CHEBI:74617"/>
    </reaction>
    <physiologicalReaction direction="left-to-right" evidence="12">
        <dbReference type="Rhea" id="RHEA:40500"/>
    </physiologicalReaction>
</comment>
<comment type="catalytic activity">
    <reaction evidence="6">
        <text>1-hexadecanoyl-sn-glycero-3-phosphocholine + H2O = sn-glycerol 3-phosphocholine + hexadecanoate + H(+)</text>
        <dbReference type="Rhea" id="RHEA:40435"/>
        <dbReference type="ChEBI" id="CHEBI:7896"/>
        <dbReference type="ChEBI" id="CHEBI:15377"/>
        <dbReference type="ChEBI" id="CHEBI:15378"/>
        <dbReference type="ChEBI" id="CHEBI:16870"/>
        <dbReference type="ChEBI" id="CHEBI:72998"/>
    </reaction>
    <physiologicalReaction direction="left-to-right" evidence="12">
        <dbReference type="Rhea" id="RHEA:40436"/>
    </physiologicalReaction>
</comment>
<comment type="catalytic activity">
    <reaction evidence="6">
        <text>1,3-di-(9Z-octadecenoyl)-glycerol + H2O = 3-(9Z-octadecenoyl)-sn-glycerol + (9Z)-octadecenoate + H(+)</text>
        <dbReference type="Rhea" id="RHEA:38651"/>
        <dbReference type="ChEBI" id="CHEBI:15377"/>
        <dbReference type="ChEBI" id="CHEBI:15378"/>
        <dbReference type="ChEBI" id="CHEBI:30823"/>
        <dbReference type="ChEBI" id="CHEBI:75735"/>
        <dbReference type="ChEBI" id="CHEBI:75938"/>
    </reaction>
    <physiologicalReaction direction="left-to-right" evidence="12">
        <dbReference type="Rhea" id="RHEA:38652"/>
    </physiologicalReaction>
</comment>
<comment type="catalytic activity">
    <reaction evidence="2">
        <text>1,2,3-tri-(9Z-octadecenoyl)-glycerol + H2O = di-(9Z)-octadecenoylglycerol + (9Z)-octadecenoate + H(+)</text>
        <dbReference type="Rhea" id="RHEA:38575"/>
        <dbReference type="ChEBI" id="CHEBI:15377"/>
        <dbReference type="ChEBI" id="CHEBI:15378"/>
        <dbReference type="ChEBI" id="CHEBI:30823"/>
        <dbReference type="ChEBI" id="CHEBI:53753"/>
        <dbReference type="ChEBI" id="CHEBI:75945"/>
    </reaction>
    <physiologicalReaction direction="left-to-right" evidence="2">
        <dbReference type="Rhea" id="RHEA:38576"/>
    </physiologicalReaction>
</comment>
<comment type="catalytic activity">
    <reaction evidence="2">
        <text>1,2-di-(9Z-octadecenoyl)-sn-glycero-3-phosphocholine + H2O = (9Z-octadecenoyl)-sn-glycero-3-phosphocholine + (9Z)-octadecenoate + H(+)</text>
        <dbReference type="Rhea" id="RHEA:38699"/>
        <dbReference type="ChEBI" id="CHEBI:15377"/>
        <dbReference type="ChEBI" id="CHEBI:15378"/>
        <dbReference type="ChEBI" id="CHEBI:30823"/>
        <dbReference type="ChEBI" id="CHEBI:74669"/>
        <dbReference type="ChEBI" id="CHEBI:76083"/>
    </reaction>
    <physiologicalReaction direction="left-to-right" evidence="2">
        <dbReference type="Rhea" id="RHEA:38700"/>
    </physiologicalReaction>
</comment>
<comment type="catalytic activity">
    <reaction evidence="2">
        <text>1,2,3-tributanoylglycerol + H2O = dibutanoylglycerol + butanoate + H(+)</text>
        <dbReference type="Rhea" id="RHEA:40475"/>
        <dbReference type="ChEBI" id="CHEBI:15377"/>
        <dbReference type="ChEBI" id="CHEBI:15378"/>
        <dbReference type="ChEBI" id="CHEBI:17968"/>
        <dbReference type="ChEBI" id="CHEBI:35020"/>
        <dbReference type="ChEBI" id="CHEBI:76478"/>
    </reaction>
    <physiologicalReaction direction="left-to-right" evidence="2">
        <dbReference type="Rhea" id="RHEA:40476"/>
    </physiologicalReaction>
</comment>
<comment type="catalytic activity">
    <reaction evidence="10">
        <text>1,2-dihexadecanoyl-sn-glycero-3-phosphocholine + H2O = hexadecanoyl-sn-glycero-3-phosphocholine + hexadecanoate + H(+)</text>
        <dbReference type="Rhea" id="RHEA:41384"/>
        <dbReference type="ChEBI" id="CHEBI:7896"/>
        <dbReference type="ChEBI" id="CHEBI:15377"/>
        <dbReference type="ChEBI" id="CHEBI:15378"/>
        <dbReference type="ChEBI" id="CHEBI:64563"/>
        <dbReference type="ChEBI" id="CHEBI:72999"/>
    </reaction>
    <physiologicalReaction direction="left-to-right" evidence="10">
        <dbReference type="Rhea" id="RHEA:41385"/>
    </physiologicalReaction>
</comment>
<comment type="activity regulation">
    <text evidence="6">Phospholipase A1 and lysophospholipase activities are inhibited by annexin II.</text>
</comment>
<comment type="biophysicochemical properties">
    <kinetics>
        <KM evidence="10">0.82 mM for 1,2,3-tri-(9Z-octadecenoyl)-glycerol</KM>
        <KM evidence="10">0.16 mM for 1,2-di-O-palmitoyl-sn-glycero-3-phosphocholine</KM>
        <Vmax evidence="8">144.0 umol/min/mg enzyme with 1-oleoyl-sn-glycerol as substrate</Vmax>
        <Vmax evidence="8">163.0 umol/min/mg enzyme with 1,2-dioleoyl-sn-glycerol as substrate</Vmax>
        <Vmax evidence="8">145.0 umol/min/mg enzyme with 1,3-dioleoyl-sn-glycerol as substrate</Vmax>
        <Vmax evidence="8">67.0 umol/min/mg enzyme with phosphatidic acid as substrate</Vmax>
        <Vmax evidence="8">50.0 umol/min/mg enzyme with phosphatidylethanolamine as substrate</Vmax>
        <Vmax evidence="8">4.0 umol/min/mg enzyme with phosphatidylcholine as substrate</Vmax>
    </kinetics>
    <phDependence>
        <text evidence="10">Optimum pH is 8-9.</text>
    </phDependence>
</comment>
<comment type="subunit">
    <text evidence="2">Homodimer.</text>
</comment>
<comment type="subcellular location">
    <subcellularLocation>
        <location evidence="2">Secreted</location>
    </subcellularLocation>
</comment>
<comment type="similarity">
    <text evidence="11">Belongs to the AB hydrolase superfamily. Lipase family.</text>
</comment>
<evidence type="ECO:0000250" key="1"/>
<evidence type="ECO:0000250" key="2">
    <source>
        <dbReference type="UniProtKB" id="P11150"/>
    </source>
</evidence>
<evidence type="ECO:0000255" key="3"/>
<evidence type="ECO:0000255" key="4">
    <source>
        <dbReference type="PROSITE-ProRule" id="PRU00152"/>
    </source>
</evidence>
<evidence type="ECO:0000255" key="5">
    <source>
        <dbReference type="PROSITE-ProRule" id="PRU10037"/>
    </source>
</evidence>
<evidence type="ECO:0000269" key="6">
    <source>
    </source>
</evidence>
<evidence type="ECO:0000269" key="7">
    <source>
    </source>
</evidence>
<evidence type="ECO:0000269" key="8">
    <source>
    </source>
</evidence>
<evidence type="ECO:0000269" key="9">
    <source>
    </source>
</evidence>
<evidence type="ECO:0000269" key="10">
    <source>
    </source>
</evidence>
<evidence type="ECO:0000305" key="11"/>
<evidence type="ECO:0000305" key="12">
    <source>
    </source>
</evidence>
<evidence type="ECO:0000305" key="13">
    <source>
    </source>
</evidence>
<reference key="1">
    <citation type="journal article" date="1990" name="Biochim. Biophys. Acta">
        <title>Isolation and characterization of clones for the rat hepatic lipase gene upstream regulatory region.</title>
        <authorList>
            <person name="Sensel M.G."/>
            <person name="Legrand-Lorans A."/>
            <person name="Wang M.E."/>
            <person name="Bensadoun A."/>
        </authorList>
    </citation>
    <scope>NUCLEOTIDE SEQUENCE [GENOMIC DNA / MRNA]</scope>
    <source>
        <strain>Sprague-Dawley</strain>
        <tissue>Liver</tissue>
    </source>
</reference>
<reference key="2">
    <citation type="journal article" date="1987" name="Proc. Natl. Acad. Sci. U.S.A.">
        <title>Cloning of rat hepatic lipase cDNA: evidence for a lipase gene family.</title>
        <authorList>
            <person name="Komaromy M.C."/>
            <person name="Schotz M.C."/>
        </authorList>
    </citation>
    <scope>NUCLEOTIDE SEQUENCE [MRNA]</scope>
    <source>
        <tissue>Liver</tissue>
    </source>
</reference>
<reference key="3">
    <citation type="journal article" date="1982" name="Biochim. Biophys. Acta">
        <title>Triacylglycerol lipase, monoacylglycerol lipase and phospholipase activities of highly purified rat hepatic lipase.</title>
        <authorList>
            <person name="Jensen G.L."/>
            <person name="Daggy B."/>
            <person name="Bensadoun A."/>
        </authorList>
    </citation>
    <scope>FUNCTION</scope>
    <scope>CATALYTIC ACTIVITY</scope>
    <scope>BIOPHYSICOCHEMICAL PROPERTIES</scope>
</reference>
<reference key="4">
    <citation type="journal article" date="1984" name="J. Lipid Res.">
        <title>A role for hepatic lipase in chylomicron and high density lipoprotein phospholipid metabolism.</title>
        <authorList>
            <person name="Landin B."/>
            <person name="Nilsson A."/>
            <person name="Twu J.S."/>
            <person name="Schotz M.C."/>
        </authorList>
    </citation>
    <scope>FUNCTION</scope>
    <scope>CATALYTIC ACTIVITY</scope>
</reference>
<reference key="5">
    <citation type="journal article" date="1991" name="J. Lipid Res.">
        <title>Rabbit hepatic lipase cDNA sequence: low activity is associated with low messenger RNA levels.</title>
        <authorList>
            <person name="Warren R.J."/>
            <person name="Ebert D.L."/>
            <person name="Mitchell A."/>
            <person name="Barter P.J."/>
        </authorList>
    </citation>
    <scope>FUNCTION</scope>
    <scope>CATALYTIC ACTIVITY</scope>
</reference>
<reference key="6">
    <citation type="journal article" date="1991" name="Lipids">
        <title>Hydrolysis of neutral lipid substrates by rat hepatic lipase.</title>
        <authorList>
            <person name="Wilcox R.W."/>
            <person name="Thuren T."/>
            <person name="Sisson P."/>
            <person name="Kucera G.L."/>
            <person name="Waite M."/>
        </authorList>
    </citation>
    <scope>FUNCTION</scope>
    <scope>CATALYTIC ACTIVITY</scope>
    <scope>BIOPHYSICOCHEMICAL PROPERTIES</scope>
</reference>
<reference key="7">
    <citation type="journal article" date="1992" name="FEBS Lett.">
        <title>Annexin II inhibits calcium-dependent phospholipase A1 and lysophospholipase but not triacyl glycerol lipase activities of rat liver hepatic lipase.</title>
        <authorList>
            <person name="Bohn E."/>
            <person name="Gerke V."/>
            <person name="Kresse H."/>
            <person name="Loeffler B.M."/>
            <person name="Kunze H."/>
        </authorList>
    </citation>
    <scope>FUNCTION</scope>
    <scope>CATALYTIC ACTIVITY</scope>
    <scope>ACTIVITY REGULATION</scope>
</reference>
<organism>
    <name type="scientific">Rattus norvegicus</name>
    <name type="common">Rat</name>
    <dbReference type="NCBI Taxonomy" id="10116"/>
    <lineage>
        <taxon>Eukaryota</taxon>
        <taxon>Metazoa</taxon>
        <taxon>Chordata</taxon>
        <taxon>Craniata</taxon>
        <taxon>Vertebrata</taxon>
        <taxon>Euteleostomi</taxon>
        <taxon>Mammalia</taxon>
        <taxon>Eutheria</taxon>
        <taxon>Euarchontoglires</taxon>
        <taxon>Glires</taxon>
        <taxon>Rodentia</taxon>
        <taxon>Myomorpha</taxon>
        <taxon>Muroidea</taxon>
        <taxon>Muridae</taxon>
        <taxon>Murinae</taxon>
        <taxon>Rattus</taxon>
    </lineage>
</organism>
<sequence>MGNHLQISVSLVLCIFIQSSACGQGVGTEPFGRNLGATEERKPLQKPEIRFLLFKDESDRLGCQLRPQHPETLQECGFNSSHPLVMIIHGWSVDGLLETWIWKIVGALKSRQSQPVNVGLVDWISLAYQHYAIAVRNTRVVGQEVAALLLWLEESMKFSRSKVHLIGYSLGAHVSGFAGSSMGGKRKIGRITGLDPAGPMFEGTSPNERLSPDDANFVDAIHTFTREHMGLSVGIKQPIAHYDFYPNGGSFQPGCHFLELYKHIAEHGLNAITQTINCAHERSVHLFIDSLQHSNLQNTGFQCSNMDSFSQGLCLNCKKGRCNSLGYDIRRIGHVKSKTLFLITRAQSPFKVYHYQFKIQFINQMEKPMEPTFTMTLLGTKEEIKKIPITLGEGITSNKTYSLLITLNKDIGELIMLKFKWENSAVWANVWNTVQTIMLWDTEPHYAGLIVKTIWVKAGETQQRMTFCPDNVDDLQLHPTQEKVFVKCDLKSKD</sequence>
<accession>P07867</accession>